<accession>Q2J4R7</accession>
<sequence>MLLAIDVGNTNTVVGVFEGEHLADSWRVRTDPQATADELVLLYRGLLGEYQVTGVSICSTVPAALRALRRMVVRAFHDIPVVIVEPGTRTGVPILIDNPKEAGADRIMNTLAAHHLYGGPAIVVDFGTSTNLDIVSARGEFIGGIFAPGIEIALDALASRAAQLRKVELVAPRSVIGKSTVEALQSGMIYGVAGQVDGLVRRIRAELDTDAVAIATGGLASVVIKESETLDRHEPHLTLIGLRLVFEKNI</sequence>
<name>COAX_FRACC</name>
<feature type="chain" id="PRO_0000267537" description="Type III pantothenate kinase">
    <location>
        <begin position="1"/>
        <end position="250"/>
    </location>
</feature>
<feature type="active site" description="Proton acceptor" evidence="1">
    <location>
        <position position="105"/>
    </location>
</feature>
<feature type="binding site" evidence="1">
    <location>
        <begin position="6"/>
        <end position="13"/>
    </location>
    <ligand>
        <name>ATP</name>
        <dbReference type="ChEBI" id="CHEBI:30616"/>
    </ligand>
</feature>
<feature type="binding site" evidence="1">
    <location>
        <begin position="103"/>
        <end position="106"/>
    </location>
    <ligand>
        <name>substrate</name>
    </ligand>
</feature>
<feature type="binding site" evidence="1">
    <location>
        <position position="125"/>
    </location>
    <ligand>
        <name>K(+)</name>
        <dbReference type="ChEBI" id="CHEBI:29103"/>
    </ligand>
</feature>
<feature type="binding site" evidence="1">
    <location>
        <position position="128"/>
    </location>
    <ligand>
        <name>ATP</name>
        <dbReference type="ChEBI" id="CHEBI:30616"/>
    </ligand>
</feature>
<feature type="binding site" evidence="1">
    <location>
        <position position="180"/>
    </location>
    <ligand>
        <name>substrate</name>
    </ligand>
</feature>
<protein>
    <recommendedName>
        <fullName evidence="1">Type III pantothenate kinase</fullName>
        <ecNumber evidence="1">2.7.1.33</ecNumber>
    </recommendedName>
    <alternativeName>
        <fullName evidence="1">PanK-III</fullName>
    </alternativeName>
    <alternativeName>
        <fullName evidence="1">Pantothenic acid kinase</fullName>
    </alternativeName>
</protein>
<evidence type="ECO:0000255" key="1">
    <source>
        <dbReference type="HAMAP-Rule" id="MF_01274"/>
    </source>
</evidence>
<organism>
    <name type="scientific">Frankia casuarinae (strain DSM 45818 / CECT 9043 / HFP020203 / CcI3)</name>
    <dbReference type="NCBI Taxonomy" id="106370"/>
    <lineage>
        <taxon>Bacteria</taxon>
        <taxon>Bacillati</taxon>
        <taxon>Actinomycetota</taxon>
        <taxon>Actinomycetes</taxon>
        <taxon>Frankiales</taxon>
        <taxon>Frankiaceae</taxon>
        <taxon>Frankia</taxon>
    </lineage>
</organism>
<proteinExistence type="inferred from homology"/>
<reference key="1">
    <citation type="journal article" date="2007" name="Genome Res.">
        <title>Genome characteristics of facultatively symbiotic Frankia sp. strains reflect host range and host plant biogeography.</title>
        <authorList>
            <person name="Normand P."/>
            <person name="Lapierre P."/>
            <person name="Tisa L.S."/>
            <person name="Gogarten J.P."/>
            <person name="Alloisio N."/>
            <person name="Bagnarol E."/>
            <person name="Bassi C.A."/>
            <person name="Berry A.M."/>
            <person name="Bickhart D.M."/>
            <person name="Choisne N."/>
            <person name="Couloux A."/>
            <person name="Cournoyer B."/>
            <person name="Cruveiller S."/>
            <person name="Daubin V."/>
            <person name="Demange N."/>
            <person name="Francino M.P."/>
            <person name="Goltsman E."/>
            <person name="Huang Y."/>
            <person name="Kopp O.R."/>
            <person name="Labarre L."/>
            <person name="Lapidus A."/>
            <person name="Lavire C."/>
            <person name="Marechal J."/>
            <person name="Martinez M."/>
            <person name="Mastronunzio J.E."/>
            <person name="Mullin B.C."/>
            <person name="Niemann J."/>
            <person name="Pujic P."/>
            <person name="Rawnsley T."/>
            <person name="Rouy Z."/>
            <person name="Schenowitz C."/>
            <person name="Sellstedt A."/>
            <person name="Tavares F."/>
            <person name="Tomkins J.P."/>
            <person name="Vallenet D."/>
            <person name="Valverde C."/>
            <person name="Wall L.G."/>
            <person name="Wang Y."/>
            <person name="Medigue C."/>
            <person name="Benson D.R."/>
        </authorList>
    </citation>
    <scope>NUCLEOTIDE SEQUENCE [LARGE SCALE GENOMIC DNA]</scope>
    <source>
        <strain>DSM 45818 / CECT 9043 / HFP020203 / CcI3</strain>
    </source>
</reference>
<comment type="function">
    <text evidence="1">Catalyzes the phosphorylation of pantothenate (Pan), the first step in CoA biosynthesis.</text>
</comment>
<comment type="catalytic activity">
    <reaction evidence="1">
        <text>(R)-pantothenate + ATP = (R)-4'-phosphopantothenate + ADP + H(+)</text>
        <dbReference type="Rhea" id="RHEA:16373"/>
        <dbReference type="ChEBI" id="CHEBI:10986"/>
        <dbReference type="ChEBI" id="CHEBI:15378"/>
        <dbReference type="ChEBI" id="CHEBI:29032"/>
        <dbReference type="ChEBI" id="CHEBI:30616"/>
        <dbReference type="ChEBI" id="CHEBI:456216"/>
        <dbReference type="EC" id="2.7.1.33"/>
    </reaction>
</comment>
<comment type="cofactor">
    <cofactor evidence="1">
        <name>NH4(+)</name>
        <dbReference type="ChEBI" id="CHEBI:28938"/>
    </cofactor>
    <cofactor evidence="1">
        <name>K(+)</name>
        <dbReference type="ChEBI" id="CHEBI:29103"/>
    </cofactor>
    <text evidence="1">A monovalent cation. Ammonium or potassium.</text>
</comment>
<comment type="pathway">
    <text evidence="1">Cofactor biosynthesis; coenzyme A biosynthesis; CoA from (R)-pantothenate: step 1/5.</text>
</comment>
<comment type="subunit">
    <text evidence="1">Homodimer.</text>
</comment>
<comment type="subcellular location">
    <subcellularLocation>
        <location evidence="1">Cytoplasm</location>
    </subcellularLocation>
</comment>
<comment type="similarity">
    <text evidence="1">Belongs to the type III pantothenate kinase family.</text>
</comment>
<dbReference type="EC" id="2.7.1.33" evidence="1"/>
<dbReference type="EMBL" id="CP000249">
    <property type="protein sequence ID" value="ABD13725.1"/>
    <property type="molecule type" value="Genomic_DNA"/>
</dbReference>
<dbReference type="RefSeq" id="WP_011438733.1">
    <property type="nucleotide sequence ID" value="NZ_JENI01000009.1"/>
</dbReference>
<dbReference type="SMR" id="Q2J4R7"/>
<dbReference type="STRING" id="106370.Francci3_4379"/>
<dbReference type="KEGG" id="fra:Francci3_4379"/>
<dbReference type="eggNOG" id="COG1521">
    <property type="taxonomic scope" value="Bacteria"/>
</dbReference>
<dbReference type="HOGENOM" id="CLU_066627_1_0_11"/>
<dbReference type="OrthoDB" id="9804707at2"/>
<dbReference type="PhylomeDB" id="Q2J4R7"/>
<dbReference type="UniPathway" id="UPA00241">
    <property type="reaction ID" value="UER00352"/>
</dbReference>
<dbReference type="Proteomes" id="UP000001937">
    <property type="component" value="Chromosome"/>
</dbReference>
<dbReference type="GO" id="GO:0005737">
    <property type="term" value="C:cytoplasm"/>
    <property type="evidence" value="ECO:0007669"/>
    <property type="project" value="UniProtKB-SubCell"/>
</dbReference>
<dbReference type="GO" id="GO:0005524">
    <property type="term" value="F:ATP binding"/>
    <property type="evidence" value="ECO:0007669"/>
    <property type="project" value="UniProtKB-UniRule"/>
</dbReference>
<dbReference type="GO" id="GO:0046872">
    <property type="term" value="F:metal ion binding"/>
    <property type="evidence" value="ECO:0007669"/>
    <property type="project" value="UniProtKB-KW"/>
</dbReference>
<dbReference type="GO" id="GO:0004594">
    <property type="term" value="F:pantothenate kinase activity"/>
    <property type="evidence" value="ECO:0007669"/>
    <property type="project" value="UniProtKB-UniRule"/>
</dbReference>
<dbReference type="GO" id="GO:0015937">
    <property type="term" value="P:coenzyme A biosynthetic process"/>
    <property type="evidence" value="ECO:0007669"/>
    <property type="project" value="UniProtKB-UniRule"/>
</dbReference>
<dbReference type="CDD" id="cd24015">
    <property type="entry name" value="ASKHA_NBD_PanK-III"/>
    <property type="match status" value="1"/>
</dbReference>
<dbReference type="Gene3D" id="3.30.420.40">
    <property type="match status" value="2"/>
</dbReference>
<dbReference type="HAMAP" id="MF_01274">
    <property type="entry name" value="Pantothen_kinase_3"/>
    <property type="match status" value="1"/>
</dbReference>
<dbReference type="InterPro" id="IPR043129">
    <property type="entry name" value="ATPase_NBD"/>
</dbReference>
<dbReference type="InterPro" id="IPR004619">
    <property type="entry name" value="Type_III_PanK"/>
</dbReference>
<dbReference type="NCBIfam" id="TIGR00671">
    <property type="entry name" value="baf"/>
    <property type="match status" value="1"/>
</dbReference>
<dbReference type="NCBIfam" id="NF009845">
    <property type="entry name" value="PRK13318.1-3"/>
    <property type="match status" value="1"/>
</dbReference>
<dbReference type="NCBIfam" id="NF009855">
    <property type="entry name" value="PRK13321.1"/>
    <property type="match status" value="1"/>
</dbReference>
<dbReference type="PANTHER" id="PTHR34265">
    <property type="entry name" value="TYPE III PANTOTHENATE KINASE"/>
    <property type="match status" value="1"/>
</dbReference>
<dbReference type="PANTHER" id="PTHR34265:SF1">
    <property type="entry name" value="TYPE III PANTOTHENATE KINASE"/>
    <property type="match status" value="1"/>
</dbReference>
<dbReference type="Pfam" id="PF03309">
    <property type="entry name" value="Pan_kinase"/>
    <property type="match status" value="1"/>
</dbReference>
<dbReference type="SUPFAM" id="SSF53067">
    <property type="entry name" value="Actin-like ATPase domain"/>
    <property type="match status" value="2"/>
</dbReference>
<keyword id="KW-0067">ATP-binding</keyword>
<keyword id="KW-0173">Coenzyme A biosynthesis</keyword>
<keyword id="KW-0963">Cytoplasm</keyword>
<keyword id="KW-0418">Kinase</keyword>
<keyword id="KW-0479">Metal-binding</keyword>
<keyword id="KW-0547">Nucleotide-binding</keyword>
<keyword id="KW-0630">Potassium</keyword>
<keyword id="KW-1185">Reference proteome</keyword>
<keyword id="KW-0808">Transferase</keyword>
<gene>
    <name evidence="1" type="primary">coaX</name>
    <name type="ordered locus">Francci3_4379</name>
</gene>